<evidence type="ECO:0000250" key="1"/>
<evidence type="ECO:0000250" key="2">
    <source>
        <dbReference type="UniProtKB" id="P05111"/>
    </source>
</evidence>
<evidence type="ECO:0000250" key="3">
    <source>
        <dbReference type="UniProtKB" id="P08476"/>
    </source>
</evidence>
<evidence type="ECO:0000250" key="4">
    <source>
        <dbReference type="UniProtKB" id="P17490"/>
    </source>
</evidence>
<evidence type="ECO:0000255" key="5"/>
<evidence type="ECO:0000305" key="6"/>
<sequence>MVPPLPLLLLLLLVPQGGHGCQGSELDREIVLAKVRALFLDALGPPAVTGEGGDPGVRRLPRRHALGGFARRGSEPEEEDVSQAILFPASGSRCEDEPAAGELAQEAEQGLFTYMFRPSQHMRSRQVTSAHLWFHTGLDRQGTAASNSSEPLLGLLALSSGGPMAVPVTLGQAPPCWAVLHLAASALPLLTHPVLVLLLRCPLCSCSARPEATPFLVAHTRARPPSGGERTRRSTPPLPWPWSPAALRLLQRPPEEPAAHANCHRAALNISFQELGWDRWIVHPRSFIFHYCHGGCGLSAPPDLPLPVPEVPPTPIQPLSLVPGAQPCCAALPGTMRPLRVRTTSDGGYSFKYEIVPNLLTQHCACI</sequence>
<keyword id="KW-0165">Cleavage on pair of basic residues</keyword>
<keyword id="KW-1015">Disulfide bond</keyword>
<keyword id="KW-0325">Glycoprotein</keyword>
<keyword id="KW-0339">Growth factor</keyword>
<keyword id="KW-0372">Hormone</keyword>
<keyword id="KW-1185">Reference proteome</keyword>
<keyword id="KW-0964">Secreted</keyword>
<keyword id="KW-0732">Signal</keyword>
<accession>P55101</accession>
<accession>Q28370</accession>
<feature type="signal peptide" evidence="1">
    <location>
        <begin position="1"/>
        <end position="20"/>
    </location>
</feature>
<feature type="propeptide" id="PRO_0000033682" evidence="1">
    <location>
        <begin position="21"/>
        <end position="63"/>
    </location>
</feature>
<feature type="propeptide" id="PRO_0000033683" description="Inhibin alpha N-terminal region" evidence="1">
    <location>
        <begin position="64"/>
        <end position="233"/>
    </location>
</feature>
<feature type="chain" id="PRO_0000033684" description="Inhibin alpha chain">
    <location>
        <begin position="234"/>
        <end position="367"/>
    </location>
</feature>
<feature type="site" description="Cleavage" evidence="1">
    <location>
        <begin position="63"/>
        <end position="64"/>
    </location>
</feature>
<feature type="site" description="Cleavage" evidence="1">
    <location>
        <begin position="233"/>
        <end position="234"/>
    </location>
</feature>
<feature type="glycosylation site" description="N-linked (GlcNAc...) asparagine" evidence="5">
    <location>
        <position position="147"/>
    </location>
</feature>
<feature type="glycosylation site" description="N-linked (GlcNAc...) asparagine" evidence="1">
    <location>
        <position position="269"/>
    </location>
</feature>
<feature type="disulfide bond" evidence="1">
    <location>
        <begin position="263"/>
        <end position="329"/>
    </location>
</feature>
<feature type="disulfide bond" evidence="1">
    <location>
        <begin position="292"/>
        <end position="364"/>
    </location>
</feature>
<feature type="disulfide bond" evidence="1">
    <location>
        <begin position="296"/>
        <end position="366"/>
    </location>
</feature>
<feature type="disulfide bond" description="Interchain" evidence="1">
    <location>
        <position position="328"/>
    </location>
</feature>
<feature type="sequence conflict" description="In Ref. 2; AAB00874." evidence="6" ref="2">
    <original>Q</original>
    <variation>R</variation>
    <location>
        <position position="105"/>
    </location>
</feature>
<feature type="sequence conflict" description="In Ref. 2; AAB00874." evidence="6" ref="2">
    <original>G</original>
    <variation>R</variation>
    <location>
        <position position="171"/>
    </location>
</feature>
<feature type="sequence conflict" description="In Ref. 2; AAB00874." evidence="6" ref="2">
    <original>C</original>
    <variation>R</variation>
    <location>
        <position position="176"/>
    </location>
</feature>
<name>INHA_HORSE</name>
<organism>
    <name type="scientific">Equus caballus</name>
    <name type="common">Horse</name>
    <dbReference type="NCBI Taxonomy" id="9796"/>
    <lineage>
        <taxon>Eukaryota</taxon>
        <taxon>Metazoa</taxon>
        <taxon>Chordata</taxon>
        <taxon>Craniata</taxon>
        <taxon>Vertebrata</taxon>
        <taxon>Euteleostomi</taxon>
        <taxon>Mammalia</taxon>
        <taxon>Eutheria</taxon>
        <taxon>Laurasiatheria</taxon>
        <taxon>Perissodactyla</taxon>
        <taxon>Equidae</taxon>
        <taxon>Equus</taxon>
    </lineage>
</organism>
<proteinExistence type="evidence at transcript level"/>
<protein>
    <recommendedName>
        <fullName>Inhibin alpha chain</fullName>
    </recommendedName>
</protein>
<reference key="1">
    <citation type="journal article" date="1995" name="J. Vet. Med. Sci.">
        <title>Molecular cloning of DNA for inhibin alpha-subunit from equine ovary.</title>
        <authorList>
            <person name="Yamanouchi K."/>
            <person name="Yoshida S."/>
            <person name="Hasegawa T."/>
            <person name="Ikeda A."/>
            <person name="Chang K.T."/>
            <person name="Matsuyama S."/>
            <person name="Nishihara M."/>
            <person name="Miyazawa K."/>
            <person name="Takahashi M."/>
        </authorList>
    </citation>
    <scope>NUCLEOTIDE SEQUENCE [MRNA]</scope>
    <source>
        <tissue>Ovary</tissue>
    </source>
</reference>
<reference key="2">
    <citation type="journal article" date="1996" name="Anim. Biotechnol.">
        <title>Molecular cloning and sequencing of equine inhibin alpha cDNA.</title>
        <authorList>
            <person name="Adams M.H."/>
            <person name="Baker C.B."/>
            <person name="McDowell K.J."/>
        </authorList>
    </citation>
    <scope>NUCLEOTIDE SEQUENCE [MRNA] OF 98-367</scope>
    <source>
        <tissue>Testis</tissue>
    </source>
</reference>
<comment type="function">
    <text evidence="2">Inhibins and activins inhibit and activate, respectively, the secretion of follitropin by the pituitary gland. Inhibins/activins are involved in regulating a number of diverse functions such as hypothalamic and pituitary hormone secretion, gonadal hormone secretion, germ cell development and maturation, erythroid differentiation, insulin secretion, nerve cell survival, embryonic axial development or bone growth, depending on their subunit composition. Inhibins appear to oppose the functions of activins.</text>
</comment>
<comment type="function">
    <text evidence="3">Inhibin A is a dimer of alpha/INHA and beta-A/INHBA that functions as a feedback regulator in the hypothalamic-pituitary-gonadal (HPG) axis. Inhibits the secretion of FSH from the anterior pituitary gland by acting on pituitary gonadotrope cells. Antagonizes activin A by binding to the proteoglycan, betaglycan, and forming a stable complex with and, thereby, sequestering type II activin receptors while excluding type I receptor.</text>
</comment>
<comment type="function">
    <text evidence="2 4">Inhibin B is a dimer of alpha and beta-B that plays a crucial role in the regulation of the reproductive system by inhibiting the secretion of follicle-stimulating hormone (FSH) from the anterior pituitary gland. Thereby, maintains reproductive homeostasis in both males and females. Acts as a more potent suppressor of FSH release than inhibin A (By similarity). Functions as competitive receptor antagonist binding activin type II receptors with high affinity in the presence of the TGF-beta type III coreceptor/TGFBR3L (By similarity).</text>
</comment>
<comment type="subunit">
    <text evidence="2">Dimeric, linked by one or more disulfide bonds. Activin B is a dimer of alpha and beta-B. Inhibin A is a dimer of alpha and beta-A. Inhibin B is a dimer of alpha and beta-B. Interacts with TGFBR3L; this interaction regulates female fertility.</text>
</comment>
<comment type="subcellular location">
    <subcellularLocation>
        <location evidence="4">Secreted</location>
    </subcellularLocation>
</comment>
<comment type="PTM">
    <text>Proteolytic processing yields a number of bioactive forms, consisting either solely of the mature alpha chain, of the most N-terminal propeptide linked through a disulfide bond to the mature alpha chain, or of the entire proprotein.</text>
</comment>
<comment type="similarity">
    <text evidence="6">Belongs to the TGF-beta family.</text>
</comment>
<dbReference type="EMBL" id="D50327">
    <property type="protein sequence ID" value="BAA08863.1"/>
    <property type="molecule type" value="mRNA"/>
</dbReference>
<dbReference type="EMBL" id="U21219">
    <property type="protein sequence ID" value="AAB00874.1"/>
    <property type="molecule type" value="mRNA"/>
</dbReference>
<dbReference type="RefSeq" id="NP_001075379.2">
    <property type="nucleotide sequence ID" value="NM_001081910.2"/>
</dbReference>
<dbReference type="FunCoup" id="P55101">
    <property type="interactions" value="294"/>
</dbReference>
<dbReference type="STRING" id="9796.ENSECAP00000013503"/>
<dbReference type="GlyCosmos" id="P55101">
    <property type="glycosylation" value="2 sites, No reported glycans"/>
</dbReference>
<dbReference type="PaxDb" id="9796-ENSECAP00000013503"/>
<dbReference type="PeptideAtlas" id="P55101"/>
<dbReference type="GeneID" id="100034077"/>
<dbReference type="KEGG" id="ecb:100034077"/>
<dbReference type="CTD" id="3623"/>
<dbReference type="InParanoid" id="P55101"/>
<dbReference type="OrthoDB" id="9929039at2759"/>
<dbReference type="Proteomes" id="UP000002281">
    <property type="component" value="Unplaced"/>
</dbReference>
<dbReference type="GO" id="GO:0005615">
    <property type="term" value="C:extracellular space"/>
    <property type="evidence" value="ECO:0000318"/>
    <property type="project" value="GO_Central"/>
</dbReference>
<dbReference type="GO" id="GO:0005125">
    <property type="term" value="F:cytokine activity"/>
    <property type="evidence" value="ECO:0000318"/>
    <property type="project" value="GO_Central"/>
</dbReference>
<dbReference type="GO" id="GO:0008083">
    <property type="term" value="F:growth factor activity"/>
    <property type="evidence" value="ECO:0007669"/>
    <property type="project" value="UniProtKB-KW"/>
</dbReference>
<dbReference type="GO" id="GO:0005179">
    <property type="term" value="F:hormone activity"/>
    <property type="evidence" value="ECO:0007669"/>
    <property type="project" value="UniProtKB-KW"/>
</dbReference>
<dbReference type="GO" id="GO:0042541">
    <property type="term" value="P:hemoglobin biosynthetic process"/>
    <property type="evidence" value="ECO:0000250"/>
    <property type="project" value="UniProtKB"/>
</dbReference>
<dbReference type="FunFam" id="2.10.90.10:FF:000024">
    <property type="entry name" value="Inhibin alpha chain"/>
    <property type="match status" value="1"/>
</dbReference>
<dbReference type="Gene3D" id="2.10.90.10">
    <property type="entry name" value="Cystine-knot cytokines"/>
    <property type="match status" value="1"/>
</dbReference>
<dbReference type="InterPro" id="IPR029034">
    <property type="entry name" value="Cystine-knot_cytokine"/>
</dbReference>
<dbReference type="InterPro" id="IPR017175">
    <property type="entry name" value="Inhibin_asu"/>
</dbReference>
<dbReference type="InterPro" id="IPR001839">
    <property type="entry name" value="TGF-b_C"/>
</dbReference>
<dbReference type="InterPro" id="IPR015615">
    <property type="entry name" value="TGF-beta-rel"/>
</dbReference>
<dbReference type="InterPro" id="IPR017948">
    <property type="entry name" value="TGFb_CS"/>
</dbReference>
<dbReference type="PANTHER" id="PTHR11848:SF117">
    <property type="entry name" value="INHIBIN ALPHA CHAIN"/>
    <property type="match status" value="1"/>
</dbReference>
<dbReference type="PANTHER" id="PTHR11848">
    <property type="entry name" value="TGF-BETA FAMILY"/>
    <property type="match status" value="1"/>
</dbReference>
<dbReference type="Pfam" id="PF00019">
    <property type="entry name" value="TGF_beta"/>
    <property type="match status" value="1"/>
</dbReference>
<dbReference type="PIRSF" id="PIRSF037328">
    <property type="entry name" value="Inhibin_alpha_subunit"/>
    <property type="match status" value="1"/>
</dbReference>
<dbReference type="PRINTS" id="PR00669">
    <property type="entry name" value="INHIBINA"/>
</dbReference>
<dbReference type="SMART" id="SM00204">
    <property type="entry name" value="TGFB"/>
    <property type="match status" value="1"/>
</dbReference>
<dbReference type="SUPFAM" id="SSF57501">
    <property type="entry name" value="Cystine-knot cytokines"/>
    <property type="match status" value="1"/>
</dbReference>
<dbReference type="PROSITE" id="PS00250">
    <property type="entry name" value="TGF_BETA_1"/>
    <property type="match status" value="1"/>
</dbReference>
<dbReference type="PROSITE" id="PS51362">
    <property type="entry name" value="TGF_BETA_2"/>
    <property type="match status" value="1"/>
</dbReference>
<gene>
    <name type="primary">INHA</name>
</gene>